<sequence length="234" mass="26775">MTERPKDIPEDKLVLYVVKATPTSTANTVKPLIVMNELSIDHEIYVVPSPTRDEWFHQINPHKMVPAIESAETRDGKRLNIWESTSCLTYLTDAYDHEGLWKGSDLWERTQVNNWLTLHTAALGATGKYWLYFSAIHPEKIPAVIEKLANNIKVQYDILERRLSEKGQKYIALPDRPTIADVANLPFVTEELALKAGLRLGDWPNLQAWSEKMLARPSVQKALSQKFRPSVMIR</sequence>
<keyword id="KW-0808">Transferase</keyword>
<keyword id="KW-0843">Virulence</keyword>
<comment type="function">
    <text evidence="4 5 6 7 10 11">Glutathione S-transferase; part of the gene cluster that mediates the biosynthesis of sirodesmin PL, an epipolythiodioxopiperazine (ETP) characterized by a disulfide bridged cyclic dipeptide and that acts as a phytotoxin which is involved in the blackleg didease of canola (PubMed:15387811, PubMed:18272357, PubMed:19762440). SirD catalyzes the O-prenylation of L-tyrosine (L-Tyr) in the presence of dimethylallyl diphosphate (DMAPP) to yield 4-O-dimethylallyl-L-Tyr, and therefore represents probably the first pathway-specific enzyme in the biosynthesis of sirodesmin PL (PubMed:19762440, PubMed:21038099, PubMed:24083562). 4-O-dimethylallyl-L-Tyr, then undergoes condensation with L-Ser in a reaction catalyzed by the non-ribosomal peptide synthase sirP to form the diketopiperazine (DKP) backbone (PubMed:18272357). Further bishydroxylation of the DKP performed by the cytochrome P450 monooxygenase sirC leads to the production of the intermediate phomamide (PubMed:27390873). This step is essential to form the reactive thiol group required for toxicity of sirodesmin PL (PubMed:27390873). The next steps of sirodesmin biosynthesis are not well understood yet, but some predictions could be made from intermediate compounds identification (PubMed:18272357). Phomamide is converted into phomalizarine via oxidation, probably by sirT (PubMed:18272357). Further oxidation, methylation (by sirM or sirN) and reduction steps convert phomalizarine to deacetyl sirodesmin (PubMed:18272357). Finally, acetyltransferase sirH probably acetylates deacetyl sirodesmin to produce sirodesmin PL (PubMed:18272357).</text>
</comment>
<comment type="catalytic activity">
    <reaction evidence="10">
        <text>RX + glutathione = an S-substituted glutathione + a halide anion + H(+)</text>
        <dbReference type="Rhea" id="RHEA:16437"/>
        <dbReference type="ChEBI" id="CHEBI:15378"/>
        <dbReference type="ChEBI" id="CHEBI:16042"/>
        <dbReference type="ChEBI" id="CHEBI:17792"/>
        <dbReference type="ChEBI" id="CHEBI:57925"/>
        <dbReference type="ChEBI" id="CHEBI:90779"/>
        <dbReference type="EC" id="2.5.1.18"/>
    </reaction>
</comment>
<comment type="pathway">
    <text evidence="10">Mycotoxin biosynthesis.</text>
</comment>
<comment type="induction">
    <text evidence="3">Expression is co-regulated with the other genes from the sirodesmin cluster and corresponds with sirodesmin production (PubMed:15387811).</text>
</comment>
<comment type="similarity">
    <text evidence="9">Belongs to the GST superfamily.</text>
</comment>
<evidence type="ECO:0000255" key="1">
    <source>
        <dbReference type="PROSITE-ProRule" id="PRU00684"/>
    </source>
</evidence>
<evidence type="ECO:0000255" key="2">
    <source>
        <dbReference type="PROSITE-ProRule" id="PRU00685"/>
    </source>
</evidence>
<evidence type="ECO:0000269" key="3">
    <source>
    </source>
</evidence>
<evidence type="ECO:0000269" key="4">
    <source>
    </source>
</evidence>
<evidence type="ECO:0000269" key="5">
    <source>
    </source>
</evidence>
<evidence type="ECO:0000269" key="6">
    <source>
    </source>
</evidence>
<evidence type="ECO:0000269" key="7">
    <source>
    </source>
</evidence>
<evidence type="ECO:0000303" key="8">
    <source>
    </source>
</evidence>
<evidence type="ECO:0000305" key="9"/>
<evidence type="ECO:0000305" key="10">
    <source>
    </source>
</evidence>
<evidence type="ECO:0000305" key="11">
    <source>
    </source>
</evidence>
<organism>
    <name type="scientific">Leptosphaeria maculans</name>
    <name type="common">Blackleg fungus</name>
    <name type="synonym">Phoma lingam</name>
    <dbReference type="NCBI Taxonomy" id="5022"/>
    <lineage>
        <taxon>Eukaryota</taxon>
        <taxon>Fungi</taxon>
        <taxon>Dikarya</taxon>
        <taxon>Ascomycota</taxon>
        <taxon>Pezizomycotina</taxon>
        <taxon>Dothideomycetes</taxon>
        <taxon>Pleosporomycetidae</taxon>
        <taxon>Pleosporales</taxon>
        <taxon>Pleosporineae</taxon>
        <taxon>Leptosphaeriaceae</taxon>
        <taxon>Plenodomus</taxon>
        <taxon>Plenodomus lingam/Leptosphaeria maculans species complex</taxon>
    </lineage>
</organism>
<dbReference type="EC" id="2.5.1.18" evidence="10"/>
<dbReference type="EMBL" id="AY553235">
    <property type="protein sequence ID" value="AAS92546.1"/>
    <property type="molecule type" value="Genomic_DNA"/>
</dbReference>
<dbReference type="SMR" id="Q6Q882"/>
<dbReference type="GO" id="GO:0004364">
    <property type="term" value="F:glutathione transferase activity"/>
    <property type="evidence" value="ECO:0007669"/>
    <property type="project" value="UniProtKB-EC"/>
</dbReference>
<dbReference type="Gene3D" id="1.20.1050.130">
    <property type="match status" value="1"/>
</dbReference>
<dbReference type="InterPro" id="IPR010987">
    <property type="entry name" value="Glutathione-S-Trfase_C-like"/>
</dbReference>
<dbReference type="InterPro" id="IPR036282">
    <property type="entry name" value="Glutathione-S-Trfase_C_sf"/>
</dbReference>
<dbReference type="InterPro" id="IPR040079">
    <property type="entry name" value="Glutathione_S-Trfase"/>
</dbReference>
<dbReference type="InterPro" id="IPR004045">
    <property type="entry name" value="Glutathione_S-Trfase_N"/>
</dbReference>
<dbReference type="InterPro" id="IPR004046">
    <property type="entry name" value="GST_C"/>
</dbReference>
<dbReference type="InterPro" id="IPR036249">
    <property type="entry name" value="Thioredoxin-like_sf"/>
</dbReference>
<dbReference type="PANTHER" id="PTHR44051">
    <property type="entry name" value="GLUTATHIONE S-TRANSFERASE-RELATED"/>
    <property type="match status" value="1"/>
</dbReference>
<dbReference type="PANTHER" id="PTHR44051:SF20">
    <property type="entry name" value="GLUTATHIONE TRANSFERASE 1 (EUROFUNG)"/>
    <property type="match status" value="1"/>
</dbReference>
<dbReference type="Pfam" id="PF00043">
    <property type="entry name" value="GST_C"/>
    <property type="match status" value="1"/>
</dbReference>
<dbReference type="Pfam" id="PF13409">
    <property type="entry name" value="GST_N_2"/>
    <property type="match status" value="1"/>
</dbReference>
<dbReference type="SFLD" id="SFLDS00019">
    <property type="entry name" value="Glutathione_Transferase_(cytos"/>
    <property type="match status" value="1"/>
</dbReference>
<dbReference type="SFLD" id="SFLDG00358">
    <property type="entry name" value="Main_(cytGST)"/>
    <property type="match status" value="1"/>
</dbReference>
<dbReference type="SUPFAM" id="SSF47616">
    <property type="entry name" value="GST C-terminal domain-like"/>
    <property type="match status" value="1"/>
</dbReference>
<dbReference type="SUPFAM" id="SSF52833">
    <property type="entry name" value="Thioredoxin-like"/>
    <property type="match status" value="1"/>
</dbReference>
<dbReference type="PROSITE" id="PS50405">
    <property type="entry name" value="GST_CTER"/>
    <property type="match status" value="1"/>
</dbReference>
<dbReference type="PROSITE" id="PS50404">
    <property type="entry name" value="GST_NTER"/>
    <property type="match status" value="1"/>
</dbReference>
<name>SIRG_LEPMC</name>
<reference key="1">
    <citation type="journal article" date="2004" name="Mol. Microbiol.">
        <title>The sirodesmin biosynthetic gene cluster of the plant pathogenic fungus Leptosphaeria maculans.</title>
        <authorList>
            <person name="Gardiner D.M."/>
            <person name="Cozijnsen A.J."/>
            <person name="Wilson L.M."/>
            <person name="Pedras M.S."/>
            <person name="Howlett B.J."/>
        </authorList>
    </citation>
    <scope>NUCLEOTIDE SEQUENCE [GENOMIC DNA]</scope>
    <scope>FUNCTION</scope>
    <scope>INDUCTION</scope>
</reference>
<reference key="2">
    <citation type="journal article" date="2008" name="Mycol. Res.">
        <title>Biosynthetic gene clusters for epipolythiodioxopiperazines in filamentous fungi.</title>
        <authorList>
            <person name="Fox E.M."/>
            <person name="Howlett B.J."/>
        </authorList>
    </citation>
    <scope>FUNCTION</scope>
</reference>
<reference key="3">
    <citation type="journal article" date="2010" name="Microbiology">
        <title>A tyrosine O-prenyltransferase catalyses the first pathway-specific step in the biosynthesis of sirodesmin PL.</title>
        <authorList>
            <person name="Kremer A."/>
            <person name="Li S.M."/>
        </authorList>
    </citation>
    <scope>FUNCTION</scope>
</reference>
<reference key="4">
    <citation type="journal article" date="2011" name="Appl. Microbiol. Biotechnol.">
        <title>The tyrosine O-prenyltransferase SirD catalyzes O-, N-, and C-prenylations.</title>
        <authorList>
            <person name="Zou H.X."/>
            <person name="Xie X."/>
            <person name="Zheng X.D."/>
            <person name="Li S.M."/>
        </authorList>
    </citation>
    <scope>FUNCTION</scope>
</reference>
<reference key="5">
    <citation type="journal article" date="2013" name="ACS Chem. Biol.">
        <title>Tyrosine O-prenyltransferase SirD catalyzes S-, C-, and N-prenylations on tyrosine and tryptophan derivatives.</title>
        <authorList>
            <person name="Rudolf J.D."/>
            <person name="Poulter C.D."/>
        </authorList>
    </citation>
    <scope>FUNCTION</scope>
</reference>
<reference key="6">
    <citation type="journal article" date="2016" name="PLoS ONE">
        <title>The epipolythiodiketopiperazine gene cluster in Claviceps purpurea: dysfunctional cytochrome P450 enzyme prevents formation of the previously unknown clapurines.</title>
        <authorList>
            <person name="Dopstadt J."/>
            <person name="Neubauer L."/>
            <person name="Tudzynski P."/>
            <person name="Humpf H.U."/>
        </authorList>
    </citation>
    <scope>FUNCTION</scope>
</reference>
<feature type="chain" id="PRO_0000437725" description="Glutathione S-transferase sirG">
    <location>
        <begin position="1"/>
        <end position="234"/>
    </location>
</feature>
<feature type="domain" description="GST N-terminal" evidence="1">
    <location>
        <begin position="15"/>
        <end position="99"/>
    </location>
</feature>
<feature type="domain" description="GST C-terminal" evidence="2">
    <location>
        <begin position="105"/>
        <end position="230"/>
    </location>
</feature>
<accession>Q6Q882</accession>
<gene>
    <name evidence="8" type="primary">sirG</name>
</gene>
<proteinExistence type="evidence at transcript level"/>
<protein>
    <recommendedName>
        <fullName evidence="8">Glutathione S-transferase sirG</fullName>
        <ecNumber evidence="10">2.5.1.18</ecNumber>
    </recommendedName>
    <alternativeName>
        <fullName evidence="8">Sirodesmin biosynthesis protein G</fullName>
    </alternativeName>
</protein>